<protein>
    <recommendedName>
        <fullName evidence="1">Cytochrome c-552</fullName>
        <ecNumber evidence="1">1.7.2.2</ecNumber>
    </recommendedName>
    <alternativeName>
        <fullName evidence="1">Ammonia-forming cytochrome c nitrite reductase</fullName>
        <shortName evidence="1">Cytochrome c nitrite reductase</shortName>
    </alternativeName>
</protein>
<sequence>MTRIKINARRIFSLLIPFFFFTSVHAEQTAAPAKPVTVEAKNETFAPQHPDQYLSWKATSEQSERVDALAEDPRLVILWAGYPFSRDYNKPRGHAFAVTDVRETLRTGAPKNAEDGPLPMACWSCKSPDVARLIQKDGEDGYFHGKWARGGPEIVNNLGCADCHNTASPEFAKGKPELTLSRPYAARAMEAIGKPFEKAGRFDQQSMVCGQCHVEYYFDGKNKAVKFPWDDGMKVENMEQYYDKIAFSDWTNSLSKTPMLKAQHPEYETWTAGIHGKNNVTCIDCHMPKVQNAEGKLYTDHKIGNPFDNFAQTCANCHTQDKAALQKVVAERKQSINDLKIKVEDQLVHAHFEAKAALDAGATEAEMKPIQDDIRHAQWRWDLAIASHGIHMHAPEEGLRMLGTAMDKAADARTKLARLLATKGITHEIQIPDISTKEKAQQAIGLNMEQIKAEKQDFIKTVIPQWEEQARKNGLLSQ</sequence>
<keyword id="KW-0106">Calcium</keyword>
<keyword id="KW-0249">Electron transport</keyword>
<keyword id="KW-0349">Heme</keyword>
<keyword id="KW-0408">Iron</keyword>
<keyword id="KW-0479">Metal-binding</keyword>
<keyword id="KW-0560">Oxidoreductase</keyword>
<keyword id="KW-0574">Periplasm</keyword>
<keyword id="KW-0732">Signal</keyword>
<keyword id="KW-0813">Transport</keyword>
<dbReference type="EC" id="1.7.2.2" evidence="1"/>
<dbReference type="EMBL" id="CP000036">
    <property type="protein sequence ID" value="ABB68533.1"/>
    <property type="molecule type" value="Genomic_DNA"/>
</dbReference>
<dbReference type="RefSeq" id="WP_000196875.1">
    <property type="nucleotide sequence ID" value="NC_007613.1"/>
</dbReference>
<dbReference type="SMR" id="Q31TS5"/>
<dbReference type="GeneID" id="93777759"/>
<dbReference type="KEGG" id="sbo:SBO_4101"/>
<dbReference type="HOGENOM" id="CLU_035040_1_0_6"/>
<dbReference type="UniPathway" id="UPA00653"/>
<dbReference type="Proteomes" id="UP000007067">
    <property type="component" value="Chromosome"/>
</dbReference>
<dbReference type="GO" id="GO:0030288">
    <property type="term" value="C:outer membrane-bounded periplasmic space"/>
    <property type="evidence" value="ECO:0007669"/>
    <property type="project" value="TreeGrafter"/>
</dbReference>
<dbReference type="GO" id="GO:0005509">
    <property type="term" value="F:calcium ion binding"/>
    <property type="evidence" value="ECO:0007669"/>
    <property type="project" value="UniProtKB-UniRule"/>
</dbReference>
<dbReference type="GO" id="GO:0020037">
    <property type="term" value="F:heme binding"/>
    <property type="evidence" value="ECO:0007669"/>
    <property type="project" value="InterPro"/>
</dbReference>
<dbReference type="GO" id="GO:0005506">
    <property type="term" value="F:iron ion binding"/>
    <property type="evidence" value="ECO:0007669"/>
    <property type="project" value="UniProtKB-UniRule"/>
</dbReference>
<dbReference type="GO" id="GO:0042279">
    <property type="term" value="F:nitrite reductase (cytochrome, ammonia-forming) activity"/>
    <property type="evidence" value="ECO:0007669"/>
    <property type="project" value="UniProtKB-UniRule"/>
</dbReference>
<dbReference type="GO" id="GO:0019645">
    <property type="term" value="P:anaerobic electron transport chain"/>
    <property type="evidence" value="ECO:0007669"/>
    <property type="project" value="TreeGrafter"/>
</dbReference>
<dbReference type="GO" id="GO:0042128">
    <property type="term" value="P:nitrate assimilation"/>
    <property type="evidence" value="ECO:0007669"/>
    <property type="project" value="UniProtKB-UniRule"/>
</dbReference>
<dbReference type="CDD" id="cd00548">
    <property type="entry name" value="NrfA-like"/>
    <property type="match status" value="1"/>
</dbReference>
<dbReference type="FunFam" id="1.10.1130.10:FF:000002">
    <property type="entry name" value="Cytochrome c-552"/>
    <property type="match status" value="1"/>
</dbReference>
<dbReference type="FunFam" id="1.20.140.10:FF:000014">
    <property type="entry name" value="Cytochrome c-552"/>
    <property type="match status" value="1"/>
</dbReference>
<dbReference type="Gene3D" id="1.20.140.10">
    <property type="entry name" value="Butyryl-CoA Dehydrogenase, subunit A, domain 3"/>
    <property type="match status" value="1"/>
</dbReference>
<dbReference type="Gene3D" id="1.10.1130.10">
    <property type="entry name" value="Flavocytochrome C3, Chain A"/>
    <property type="match status" value="1"/>
</dbReference>
<dbReference type="HAMAP" id="MF_01182">
    <property type="entry name" value="Cytochrom_C552"/>
    <property type="match status" value="1"/>
</dbReference>
<dbReference type="InterPro" id="IPR003321">
    <property type="entry name" value="Cyt_c552"/>
</dbReference>
<dbReference type="InterPro" id="IPR017570">
    <property type="entry name" value="Cyt_c_NO2Rdtase_formate-dep"/>
</dbReference>
<dbReference type="InterPro" id="IPR036280">
    <property type="entry name" value="Multihaem_cyt_sf"/>
</dbReference>
<dbReference type="NCBIfam" id="TIGR03152">
    <property type="entry name" value="cyto_c552_HCOOH"/>
    <property type="match status" value="1"/>
</dbReference>
<dbReference type="NCBIfam" id="NF008339">
    <property type="entry name" value="PRK11125.1"/>
    <property type="match status" value="1"/>
</dbReference>
<dbReference type="PANTHER" id="PTHR30633:SF0">
    <property type="entry name" value="CYTOCHROME C-552"/>
    <property type="match status" value="1"/>
</dbReference>
<dbReference type="PANTHER" id="PTHR30633">
    <property type="entry name" value="CYTOCHROME C-552 RESPIRATORY NITRITE REDUCTASE"/>
    <property type="match status" value="1"/>
</dbReference>
<dbReference type="Pfam" id="PF02335">
    <property type="entry name" value="Cytochrom_C552"/>
    <property type="match status" value="1"/>
</dbReference>
<dbReference type="PIRSF" id="PIRSF000243">
    <property type="entry name" value="Cyt_c552"/>
    <property type="match status" value="1"/>
</dbReference>
<dbReference type="SUPFAM" id="SSF48695">
    <property type="entry name" value="Multiheme cytochromes"/>
    <property type="match status" value="1"/>
</dbReference>
<dbReference type="PROSITE" id="PS51008">
    <property type="entry name" value="MULTIHEME_CYTC"/>
    <property type="match status" value="1"/>
</dbReference>
<comment type="function">
    <text evidence="1">Catalyzes the reduction of nitrite to ammonia, consuming six electrons in the process.</text>
</comment>
<comment type="catalytic activity">
    <reaction evidence="1">
        <text>6 Fe(III)-[cytochrome c] + NH4(+) + 2 H2O = 6 Fe(II)-[cytochrome c] + nitrite + 8 H(+)</text>
        <dbReference type="Rhea" id="RHEA:13089"/>
        <dbReference type="Rhea" id="RHEA-COMP:10350"/>
        <dbReference type="Rhea" id="RHEA-COMP:14399"/>
        <dbReference type="ChEBI" id="CHEBI:15377"/>
        <dbReference type="ChEBI" id="CHEBI:15378"/>
        <dbReference type="ChEBI" id="CHEBI:16301"/>
        <dbReference type="ChEBI" id="CHEBI:28938"/>
        <dbReference type="ChEBI" id="CHEBI:29033"/>
        <dbReference type="ChEBI" id="CHEBI:29034"/>
        <dbReference type="EC" id="1.7.2.2"/>
    </reaction>
</comment>
<comment type="cofactor">
    <cofactor evidence="1">
        <name>Ca(2+)</name>
        <dbReference type="ChEBI" id="CHEBI:29108"/>
    </cofactor>
    <text evidence="1">Binds 1 Ca(2+) ion per monomer.</text>
</comment>
<comment type="cofactor">
    <cofactor evidence="1">
        <name>heme c</name>
        <dbReference type="ChEBI" id="CHEBI:61717"/>
    </cofactor>
    <text evidence="1">Binds 5 heme c groups covalently per monomer.</text>
</comment>
<comment type="pathway">
    <text evidence="1">Nitrogen metabolism; nitrate reduction (assimilation).</text>
</comment>
<comment type="subcellular location">
    <subcellularLocation>
        <location evidence="1">Periplasm</location>
    </subcellularLocation>
</comment>
<comment type="similarity">
    <text evidence="1">Belongs to the cytochrome c-552 family.</text>
</comment>
<gene>
    <name evidence="1" type="primary">nrfA</name>
    <name type="ordered locus">SBO_4101</name>
</gene>
<name>NRFA_SHIBS</name>
<evidence type="ECO:0000255" key="1">
    <source>
        <dbReference type="HAMAP-Rule" id="MF_01182"/>
    </source>
</evidence>
<organism>
    <name type="scientific">Shigella boydii serotype 4 (strain Sb227)</name>
    <dbReference type="NCBI Taxonomy" id="300268"/>
    <lineage>
        <taxon>Bacteria</taxon>
        <taxon>Pseudomonadati</taxon>
        <taxon>Pseudomonadota</taxon>
        <taxon>Gammaproteobacteria</taxon>
        <taxon>Enterobacterales</taxon>
        <taxon>Enterobacteriaceae</taxon>
        <taxon>Shigella</taxon>
    </lineage>
</organism>
<feature type="signal peptide" evidence="1">
    <location>
        <begin position="1"/>
        <end position="26"/>
    </location>
</feature>
<feature type="chain" id="PRO_0000268978" description="Cytochrome c-552">
    <location>
        <begin position="27"/>
        <end position="478"/>
    </location>
</feature>
<feature type="binding site" description="axial binding residue" evidence="1">
    <location>
        <position position="94"/>
    </location>
    <ligand>
        <name>heme c</name>
        <dbReference type="ChEBI" id="CHEBI:61717"/>
        <label>3</label>
    </ligand>
    <ligandPart>
        <name>Fe</name>
        <dbReference type="ChEBI" id="CHEBI:18248"/>
    </ligandPart>
</feature>
<feature type="binding site" description="covalent" evidence="1">
    <location>
        <position position="122"/>
    </location>
    <ligand>
        <name>heme</name>
        <dbReference type="ChEBI" id="CHEBI:30413"/>
        <label>1</label>
    </ligand>
</feature>
<feature type="binding site" description="covalent" evidence="1">
    <location>
        <position position="125"/>
    </location>
    <ligand>
        <name>heme</name>
        <dbReference type="ChEBI" id="CHEBI:30413"/>
        <label>1</label>
    </ligand>
</feature>
<feature type="binding site" description="axial binding residue" evidence="1">
    <location>
        <position position="126"/>
    </location>
    <ligand>
        <name>heme</name>
        <dbReference type="ChEBI" id="CHEBI:30413"/>
        <label>1</label>
    </ligand>
    <ligandPart>
        <name>Fe</name>
        <dbReference type="ChEBI" id="CHEBI:18248"/>
    </ligandPart>
</feature>
<feature type="binding site" description="covalent" evidence="1">
    <location>
        <position position="160"/>
    </location>
    <ligand>
        <name>heme c</name>
        <dbReference type="ChEBI" id="CHEBI:61717"/>
        <label>2</label>
    </ligand>
</feature>
<feature type="binding site" description="covalent" evidence="1">
    <location>
        <position position="163"/>
    </location>
    <ligand>
        <name>heme c</name>
        <dbReference type="ChEBI" id="CHEBI:61717"/>
        <label>2</label>
    </ligand>
</feature>
<feature type="binding site" description="axial binding residue" evidence="1">
    <location>
        <position position="164"/>
    </location>
    <ligand>
        <name>heme c</name>
        <dbReference type="ChEBI" id="CHEBI:61717"/>
        <label>2</label>
    </ligand>
    <ligandPart>
        <name>Fe</name>
        <dbReference type="ChEBI" id="CHEBI:18248"/>
    </ligandPart>
</feature>
<feature type="binding site" description="covalent" evidence="1">
    <location>
        <position position="209"/>
    </location>
    <ligand>
        <name>heme c</name>
        <dbReference type="ChEBI" id="CHEBI:61717"/>
        <label>3</label>
    </ligand>
</feature>
<feature type="binding site" description="covalent" evidence="1">
    <location>
        <position position="212"/>
    </location>
    <ligand>
        <name>heme c</name>
        <dbReference type="ChEBI" id="CHEBI:61717"/>
        <label>3</label>
    </ligand>
</feature>
<feature type="binding site" description="axial binding residue" evidence="1">
    <location>
        <position position="213"/>
    </location>
    <ligand>
        <name>heme c</name>
        <dbReference type="ChEBI" id="CHEBI:61717"/>
        <label>3</label>
    </ligand>
    <ligandPart>
        <name>Fe</name>
        <dbReference type="ChEBI" id="CHEBI:18248"/>
    </ligandPart>
</feature>
<feature type="binding site" evidence="1">
    <location>
        <position position="215"/>
    </location>
    <ligand>
        <name>Ca(2+)</name>
        <dbReference type="ChEBI" id="CHEBI:29108"/>
    </ligand>
</feature>
<feature type="binding site" evidence="1">
    <location>
        <position position="216"/>
    </location>
    <ligand>
        <name>Ca(2+)</name>
        <dbReference type="ChEBI" id="CHEBI:29108"/>
    </ligand>
</feature>
<feature type="binding site" evidence="1">
    <location>
        <position position="216"/>
    </location>
    <ligand>
        <name>substrate</name>
    </ligand>
</feature>
<feature type="binding site" evidence="1">
    <location>
        <position position="261"/>
    </location>
    <ligand>
        <name>Ca(2+)</name>
        <dbReference type="ChEBI" id="CHEBI:29108"/>
    </ligand>
</feature>
<feature type="binding site" evidence="1">
    <location>
        <position position="263"/>
    </location>
    <ligand>
        <name>Ca(2+)</name>
        <dbReference type="ChEBI" id="CHEBI:29108"/>
    </ligand>
</feature>
<feature type="binding site" evidence="1">
    <location>
        <position position="264"/>
    </location>
    <ligand>
        <name>substrate</name>
    </ligand>
</feature>
<feature type="binding site" description="axial binding residue" evidence="1">
    <location>
        <position position="275"/>
    </location>
    <ligand>
        <name>heme c</name>
        <dbReference type="ChEBI" id="CHEBI:61717"/>
        <label>5</label>
    </ligand>
    <ligandPart>
        <name>Fe</name>
        <dbReference type="ChEBI" id="CHEBI:18248"/>
    </ligandPart>
</feature>
<feature type="binding site" description="covalent" evidence="1">
    <location>
        <position position="282"/>
    </location>
    <ligand>
        <name>heme c</name>
        <dbReference type="ChEBI" id="CHEBI:61717"/>
        <label>4</label>
    </ligand>
</feature>
<feature type="binding site" description="covalent" evidence="1">
    <location>
        <position position="285"/>
    </location>
    <ligand>
        <name>heme c</name>
        <dbReference type="ChEBI" id="CHEBI:61717"/>
        <label>4</label>
    </ligand>
</feature>
<feature type="binding site" description="axial binding residue" evidence="1">
    <location>
        <position position="286"/>
    </location>
    <ligand>
        <name>heme c</name>
        <dbReference type="ChEBI" id="CHEBI:61717"/>
        <label>4</label>
    </ligand>
    <ligandPart>
        <name>Fe</name>
        <dbReference type="ChEBI" id="CHEBI:18248"/>
    </ligandPart>
</feature>
<feature type="binding site" description="axial binding residue" evidence="1">
    <location>
        <position position="301"/>
    </location>
    <ligand>
        <name>heme c</name>
        <dbReference type="ChEBI" id="CHEBI:61717"/>
        <label>2</label>
    </ligand>
    <ligandPart>
        <name>Fe</name>
        <dbReference type="ChEBI" id="CHEBI:18248"/>
    </ligandPart>
</feature>
<feature type="binding site" description="covalent" evidence="1">
    <location>
        <position position="314"/>
    </location>
    <ligand>
        <name>heme c</name>
        <dbReference type="ChEBI" id="CHEBI:61717"/>
        <label>5</label>
    </ligand>
</feature>
<feature type="binding site" description="covalent" evidence="1">
    <location>
        <position position="317"/>
    </location>
    <ligand>
        <name>heme c</name>
        <dbReference type="ChEBI" id="CHEBI:61717"/>
        <label>5</label>
    </ligand>
</feature>
<feature type="binding site" description="axial binding residue" evidence="1">
    <location>
        <position position="318"/>
    </location>
    <ligand>
        <name>heme c</name>
        <dbReference type="ChEBI" id="CHEBI:61717"/>
        <label>5</label>
    </ligand>
    <ligandPart>
        <name>Fe</name>
        <dbReference type="ChEBI" id="CHEBI:18248"/>
    </ligandPart>
</feature>
<feature type="binding site" description="axial binding residue" evidence="1">
    <location>
        <position position="393"/>
    </location>
    <ligand>
        <name>heme c</name>
        <dbReference type="ChEBI" id="CHEBI:61717"/>
        <label>4</label>
    </ligand>
    <ligandPart>
        <name>Fe</name>
        <dbReference type="ChEBI" id="CHEBI:18248"/>
    </ligandPart>
</feature>
<reference key="1">
    <citation type="journal article" date="2005" name="Nucleic Acids Res.">
        <title>Genome dynamics and diversity of Shigella species, the etiologic agents of bacillary dysentery.</title>
        <authorList>
            <person name="Yang F."/>
            <person name="Yang J."/>
            <person name="Zhang X."/>
            <person name="Chen L."/>
            <person name="Jiang Y."/>
            <person name="Yan Y."/>
            <person name="Tang X."/>
            <person name="Wang J."/>
            <person name="Xiong Z."/>
            <person name="Dong J."/>
            <person name="Xue Y."/>
            <person name="Zhu Y."/>
            <person name="Xu X."/>
            <person name="Sun L."/>
            <person name="Chen S."/>
            <person name="Nie H."/>
            <person name="Peng J."/>
            <person name="Xu J."/>
            <person name="Wang Y."/>
            <person name="Yuan Z."/>
            <person name="Wen Y."/>
            <person name="Yao Z."/>
            <person name="Shen Y."/>
            <person name="Qiang B."/>
            <person name="Hou Y."/>
            <person name="Yu J."/>
            <person name="Jin Q."/>
        </authorList>
    </citation>
    <scope>NUCLEOTIDE SEQUENCE [LARGE SCALE GENOMIC DNA]</scope>
    <source>
        <strain>Sb227</strain>
    </source>
</reference>
<proteinExistence type="inferred from homology"/>
<accession>Q31TS5</accession>